<dbReference type="EMBL" id="D31856">
    <property type="protein sequence ID" value="BAA06647.1"/>
    <property type="molecule type" value="Genomic_DNA"/>
</dbReference>
<dbReference type="EMBL" id="AL009126">
    <property type="protein sequence ID" value="CAB15968.1"/>
    <property type="molecule type" value="Genomic_DNA"/>
</dbReference>
<dbReference type="PIR" id="F70076">
    <property type="entry name" value="F70076"/>
</dbReference>
<dbReference type="RefSeq" id="NP_391811.1">
    <property type="nucleotide sequence ID" value="NC_000964.3"/>
</dbReference>
<dbReference type="RefSeq" id="WP_009968400.1">
    <property type="nucleotide sequence ID" value="NZ_OZ025638.1"/>
</dbReference>
<dbReference type="SMR" id="P42294"/>
<dbReference type="FunCoup" id="P42294">
    <property type="interactions" value="41"/>
</dbReference>
<dbReference type="STRING" id="224308.BSU39320"/>
<dbReference type="PaxDb" id="224308-BSU39320"/>
<dbReference type="EnsemblBacteria" id="CAB15968">
    <property type="protein sequence ID" value="CAB15968"/>
    <property type="gene ID" value="BSU_39320"/>
</dbReference>
<dbReference type="GeneID" id="937532"/>
<dbReference type="KEGG" id="bsu:BSU39320"/>
<dbReference type="PATRIC" id="fig|224308.179.peg.4256"/>
<dbReference type="eggNOG" id="ENOG503383N">
    <property type="taxonomic scope" value="Bacteria"/>
</dbReference>
<dbReference type="InParanoid" id="P42294"/>
<dbReference type="OrthoDB" id="2454201at2"/>
<dbReference type="BioCyc" id="BSUB:BSU39320-MONOMER"/>
<dbReference type="Proteomes" id="UP000001570">
    <property type="component" value="Chromosome"/>
</dbReference>
<dbReference type="Gene3D" id="1.20.5.2280">
    <property type="match status" value="1"/>
</dbReference>
<dbReference type="InterPro" id="IPR031681">
    <property type="entry name" value="YwqH-like"/>
</dbReference>
<dbReference type="Pfam" id="PF16888">
    <property type="entry name" value="YwqH-like"/>
    <property type="match status" value="1"/>
</dbReference>
<name>YXIB_BACSU</name>
<keyword id="KW-1185">Reference proteome</keyword>
<comment type="disruption phenotype">
    <text evidence="1">Deletion of the yxiB-yxiC-yxiD-yxxD-yxxE operon has no visible growth phenotype, however it is out-competed by wild-type cells.</text>
</comment>
<accession>P42294</accession>
<reference key="1">
    <citation type="journal article" date="1995" name="Microbiology">
        <title>Cloning and sequencing of a 29 kb region of the Bacillus subtilis genome containing the hut and wapA loci.</title>
        <authorList>
            <person name="Yoshida K."/>
            <person name="Sano H."/>
            <person name="Seki S."/>
            <person name="Oda M."/>
            <person name="Fujimura M."/>
            <person name="Fujita Y."/>
        </authorList>
    </citation>
    <scope>NUCLEOTIDE SEQUENCE [GENOMIC DNA]</scope>
    <source>
        <strain>168 / BGSC1A1</strain>
    </source>
</reference>
<reference key="2">
    <citation type="journal article" date="1997" name="Nature">
        <title>The complete genome sequence of the Gram-positive bacterium Bacillus subtilis.</title>
        <authorList>
            <person name="Kunst F."/>
            <person name="Ogasawara N."/>
            <person name="Moszer I."/>
            <person name="Albertini A.M."/>
            <person name="Alloni G."/>
            <person name="Azevedo V."/>
            <person name="Bertero M.G."/>
            <person name="Bessieres P."/>
            <person name="Bolotin A."/>
            <person name="Borchert S."/>
            <person name="Borriss R."/>
            <person name="Boursier L."/>
            <person name="Brans A."/>
            <person name="Braun M."/>
            <person name="Brignell S.C."/>
            <person name="Bron S."/>
            <person name="Brouillet S."/>
            <person name="Bruschi C.V."/>
            <person name="Caldwell B."/>
            <person name="Capuano V."/>
            <person name="Carter N.M."/>
            <person name="Choi S.-K."/>
            <person name="Codani J.-J."/>
            <person name="Connerton I.F."/>
            <person name="Cummings N.J."/>
            <person name="Daniel R.A."/>
            <person name="Denizot F."/>
            <person name="Devine K.M."/>
            <person name="Duesterhoeft A."/>
            <person name="Ehrlich S.D."/>
            <person name="Emmerson P.T."/>
            <person name="Entian K.-D."/>
            <person name="Errington J."/>
            <person name="Fabret C."/>
            <person name="Ferrari E."/>
            <person name="Foulger D."/>
            <person name="Fritz C."/>
            <person name="Fujita M."/>
            <person name="Fujita Y."/>
            <person name="Fuma S."/>
            <person name="Galizzi A."/>
            <person name="Galleron N."/>
            <person name="Ghim S.-Y."/>
            <person name="Glaser P."/>
            <person name="Goffeau A."/>
            <person name="Golightly E.J."/>
            <person name="Grandi G."/>
            <person name="Guiseppi G."/>
            <person name="Guy B.J."/>
            <person name="Haga K."/>
            <person name="Haiech J."/>
            <person name="Harwood C.R."/>
            <person name="Henaut A."/>
            <person name="Hilbert H."/>
            <person name="Holsappel S."/>
            <person name="Hosono S."/>
            <person name="Hullo M.-F."/>
            <person name="Itaya M."/>
            <person name="Jones L.-M."/>
            <person name="Joris B."/>
            <person name="Karamata D."/>
            <person name="Kasahara Y."/>
            <person name="Klaerr-Blanchard M."/>
            <person name="Klein C."/>
            <person name="Kobayashi Y."/>
            <person name="Koetter P."/>
            <person name="Koningstein G."/>
            <person name="Krogh S."/>
            <person name="Kumano M."/>
            <person name="Kurita K."/>
            <person name="Lapidus A."/>
            <person name="Lardinois S."/>
            <person name="Lauber J."/>
            <person name="Lazarevic V."/>
            <person name="Lee S.-M."/>
            <person name="Levine A."/>
            <person name="Liu H."/>
            <person name="Masuda S."/>
            <person name="Mauel C."/>
            <person name="Medigue C."/>
            <person name="Medina N."/>
            <person name="Mellado R.P."/>
            <person name="Mizuno M."/>
            <person name="Moestl D."/>
            <person name="Nakai S."/>
            <person name="Noback M."/>
            <person name="Noone D."/>
            <person name="O'Reilly M."/>
            <person name="Ogawa K."/>
            <person name="Ogiwara A."/>
            <person name="Oudega B."/>
            <person name="Park S.-H."/>
            <person name="Parro V."/>
            <person name="Pohl T.M."/>
            <person name="Portetelle D."/>
            <person name="Porwollik S."/>
            <person name="Prescott A.M."/>
            <person name="Presecan E."/>
            <person name="Pujic P."/>
            <person name="Purnelle B."/>
            <person name="Rapoport G."/>
            <person name="Rey M."/>
            <person name="Reynolds S."/>
            <person name="Rieger M."/>
            <person name="Rivolta C."/>
            <person name="Rocha E."/>
            <person name="Roche B."/>
            <person name="Rose M."/>
            <person name="Sadaie Y."/>
            <person name="Sato T."/>
            <person name="Scanlan E."/>
            <person name="Schleich S."/>
            <person name="Schroeter R."/>
            <person name="Scoffone F."/>
            <person name="Sekiguchi J."/>
            <person name="Sekowska A."/>
            <person name="Seror S.J."/>
            <person name="Serror P."/>
            <person name="Shin B.-S."/>
            <person name="Soldo B."/>
            <person name="Sorokin A."/>
            <person name="Tacconi E."/>
            <person name="Takagi T."/>
            <person name="Takahashi H."/>
            <person name="Takemaru K."/>
            <person name="Takeuchi M."/>
            <person name="Tamakoshi A."/>
            <person name="Tanaka T."/>
            <person name="Terpstra P."/>
            <person name="Tognoni A."/>
            <person name="Tosato V."/>
            <person name="Uchiyama S."/>
            <person name="Vandenbol M."/>
            <person name="Vannier F."/>
            <person name="Vassarotti A."/>
            <person name="Viari A."/>
            <person name="Wambutt R."/>
            <person name="Wedler E."/>
            <person name="Wedler H."/>
            <person name="Weitzenegger T."/>
            <person name="Winters P."/>
            <person name="Wipat A."/>
            <person name="Yamamoto H."/>
            <person name="Yamane K."/>
            <person name="Yasumoto K."/>
            <person name="Yata K."/>
            <person name="Yoshida K."/>
            <person name="Yoshikawa H.-F."/>
            <person name="Zumstein E."/>
            <person name="Yoshikawa H."/>
            <person name="Danchin A."/>
        </authorList>
    </citation>
    <scope>NUCLEOTIDE SEQUENCE [LARGE SCALE GENOMIC DNA]</scope>
    <source>
        <strain>168</strain>
    </source>
</reference>
<reference key="3">
    <citation type="journal article" date="2021" name="PLoS Genet.">
        <title>Diverse LXG toxin and antitoxin systems specifically mediate intraspecies competition in Bacillus subtilis biofilms.</title>
        <authorList>
            <person name="Kobayashi K."/>
        </authorList>
    </citation>
    <scope>DISRUPTION PHENOTYPE</scope>
    <source>
        <strain>168 / Marburg / ATCC 6051 / DSM 10 / JCM 1465 / NBRC 13719 / NCIMB 3610 / NRRL NRS-744 / VKM B-501</strain>
    </source>
</reference>
<protein>
    <recommendedName>
        <fullName>Protein YxiB</fullName>
    </recommendedName>
</protein>
<feature type="chain" id="PRO_0000050021" description="Protein YxiB">
    <location>
        <begin position="1"/>
        <end position="121"/>
    </location>
</feature>
<organism>
    <name type="scientific">Bacillus subtilis (strain 168)</name>
    <dbReference type="NCBI Taxonomy" id="224308"/>
    <lineage>
        <taxon>Bacteria</taxon>
        <taxon>Bacillati</taxon>
        <taxon>Bacillota</taxon>
        <taxon>Bacilli</taxon>
        <taxon>Bacillales</taxon>
        <taxon>Bacillaceae</taxon>
        <taxon>Bacillus</taxon>
    </lineage>
</organism>
<evidence type="ECO:0000269" key="1">
    <source>
    </source>
</evidence>
<proteinExistence type="predicted"/>
<sequence>MHSEMLLHSVKADLHEKQEQIHQLKRVLHEIRQIKHDFSEAQHLIHRPHLNREAWRGTHAERFEDIREGMNKAYQQIKSDQVSGIIESIEGKIHSLEGDVYSIRRQITRIEHEIEKEKHKK</sequence>
<gene>
    <name type="primary">yxiB</name>
    <name type="synonym">J3B</name>
    <name type="ordered locus">BSU39320</name>
</gene>